<accession>Q4R779</accession>
<keyword id="KW-1017">Isopeptide bond</keyword>
<keyword id="KW-0539">Nucleus</keyword>
<keyword id="KW-0597">Phosphoprotein</keyword>
<keyword id="KW-1185">Reference proteome</keyword>
<keyword id="KW-0687">Ribonucleoprotein</keyword>
<keyword id="KW-0690">Ribosome biogenesis</keyword>
<keyword id="KW-0832">Ubl conjugation</keyword>
<reference key="1">
    <citation type="submission" date="2005-06" db="EMBL/GenBank/DDBJ databases">
        <title>DNA sequences of macaque genes expressed in brain or testis and its evolutionary implications.</title>
        <authorList>
            <consortium name="International consortium for macaque cDNA sequencing and analysis"/>
        </authorList>
    </citation>
    <scope>NUCLEOTIDE SEQUENCE [LARGE SCALE MRNA]</scope>
    <source>
        <tissue>Testis</tissue>
    </source>
</reference>
<protein>
    <recommendedName>
        <fullName>Nucleolar protein 58</fullName>
    </recommendedName>
    <alternativeName>
        <fullName>Nucleolar protein 5</fullName>
    </alternativeName>
</protein>
<organism>
    <name type="scientific">Macaca fascicularis</name>
    <name type="common">Crab-eating macaque</name>
    <name type="synonym">Cynomolgus monkey</name>
    <dbReference type="NCBI Taxonomy" id="9541"/>
    <lineage>
        <taxon>Eukaryota</taxon>
        <taxon>Metazoa</taxon>
        <taxon>Chordata</taxon>
        <taxon>Craniata</taxon>
        <taxon>Vertebrata</taxon>
        <taxon>Euteleostomi</taxon>
        <taxon>Mammalia</taxon>
        <taxon>Eutheria</taxon>
        <taxon>Euarchontoglires</taxon>
        <taxon>Primates</taxon>
        <taxon>Haplorrhini</taxon>
        <taxon>Catarrhini</taxon>
        <taxon>Cercopithecidae</taxon>
        <taxon>Cercopithecinae</taxon>
        <taxon>Macaca</taxon>
    </lineage>
</organism>
<gene>
    <name type="primary">NOP58</name>
    <name type="synonym">NOL5</name>
    <name type="ORF">QtsA-15965</name>
</gene>
<evidence type="ECO:0000250" key="1"/>
<evidence type="ECO:0000250" key="2">
    <source>
        <dbReference type="UniProtKB" id="Q9Y2X3"/>
    </source>
</evidence>
<evidence type="ECO:0000255" key="3">
    <source>
        <dbReference type="PROSITE-ProRule" id="PRU00690"/>
    </source>
</evidence>
<evidence type="ECO:0000256" key="4">
    <source>
        <dbReference type="SAM" id="MobiDB-lite"/>
    </source>
</evidence>
<evidence type="ECO:0000305" key="5"/>
<feature type="chain" id="PRO_0000287349" description="Nucleolar protein 58">
    <location>
        <begin position="1"/>
        <end position="530"/>
    </location>
</feature>
<feature type="domain" description="Nop" evidence="3">
    <location>
        <begin position="282"/>
        <end position="400"/>
    </location>
</feature>
<feature type="region of interest" description="Disordered" evidence="4">
    <location>
        <begin position="409"/>
        <end position="530"/>
    </location>
</feature>
<feature type="compositionally biased region" description="Basic and acidic residues" evidence="4">
    <location>
        <begin position="414"/>
        <end position="427"/>
    </location>
</feature>
<feature type="compositionally biased region" description="Acidic residues" evidence="4">
    <location>
        <begin position="469"/>
        <end position="482"/>
    </location>
</feature>
<feature type="compositionally biased region" description="Basic residues" evidence="4">
    <location>
        <begin position="486"/>
        <end position="496"/>
    </location>
</feature>
<feature type="compositionally biased region" description="Basic residues" evidence="4">
    <location>
        <begin position="518"/>
        <end position="530"/>
    </location>
</feature>
<feature type="modified residue" description="Phosphothreonine" evidence="2">
    <location>
        <position position="34"/>
    </location>
</feature>
<feature type="modified residue" description="Phosphoserine" evidence="2">
    <location>
        <position position="109"/>
    </location>
</feature>
<feature type="modified residue" description="Phosphoserine" evidence="2">
    <location>
        <position position="304"/>
    </location>
</feature>
<feature type="modified residue" description="Phosphoserine" evidence="2">
    <location>
        <position position="351"/>
    </location>
</feature>
<feature type="modified residue" description="Phosphoserine" evidence="2">
    <location>
        <position position="484"/>
    </location>
</feature>
<feature type="modified residue" description="Phosphoserine" evidence="2">
    <location>
        <position position="503"/>
    </location>
</feature>
<feature type="modified residue" description="Phosphoserine" evidence="2">
    <location>
        <position position="515"/>
    </location>
</feature>
<feature type="cross-link" description="Glycyl lysine isopeptide (Lys-Gly) (interchain with G-Cter in SUMO2)" evidence="2">
    <location>
        <position position="157"/>
    </location>
</feature>
<feature type="cross-link" description="Glycyl lysine isopeptide (Lys-Gly) (interchain with G-Cter in SUMO2)" evidence="2">
    <location>
        <position position="353"/>
    </location>
</feature>
<feature type="cross-link" description="Glycyl lysine isopeptide (Lys-Gly) (interchain with G-Cter in SUMO2)" evidence="2">
    <location>
        <position position="411"/>
    </location>
</feature>
<feature type="cross-link" description="Glycyl lysine isopeptide (Lys-Gly) (interchain with G-Cter in SUMO2)" evidence="2">
    <location>
        <position position="415"/>
    </location>
</feature>
<feature type="cross-link" description="Glycyl lysine isopeptide (Lys-Gly) (interchain with G-Cter in SUMO2)" evidence="2">
    <location>
        <position position="422"/>
    </location>
</feature>
<feature type="cross-link" description="Glycyl lysine isopeptide (Lys-Gly) (interchain with G-Cter in SUMO2)" evidence="2">
    <location>
        <position position="426"/>
    </location>
</feature>
<feature type="cross-link" description="Glycyl lysine isopeptide (Lys-Gly) (interchain with G-Cter in SUMO2)" evidence="2">
    <location>
        <position position="441"/>
    </location>
</feature>
<feature type="cross-link" description="Glycyl lysine isopeptide (Lys-Gly) (interchain with G-Cter in SUMO2)" evidence="2">
    <location>
        <position position="444"/>
    </location>
</feature>
<feature type="cross-link" description="Glycyl lysine isopeptide (Lys-Gly) (interchain with G-Cter in SUMO2)" evidence="2">
    <location>
        <position position="465"/>
    </location>
</feature>
<feature type="cross-link" description="Glycyl lysine isopeptide (Lys-Gly) (interchain with G-Cter in SUMO); alternate" evidence="1">
    <location>
        <position position="467"/>
    </location>
</feature>
<feature type="cross-link" description="Glycyl lysine isopeptide (Lys-Gly) (interchain with G-Cter in SUMO1); alternate" evidence="2">
    <location>
        <position position="467"/>
    </location>
</feature>
<feature type="cross-link" description="Glycyl lysine isopeptide (Lys-Gly) (interchain with G-Cter in SUMO2); alternate" evidence="2">
    <location>
        <position position="467"/>
    </location>
</feature>
<feature type="cross-link" description="Glycyl lysine isopeptide (Lys-Gly) (interchain with G-Cter in SUMO2)" evidence="2">
    <location>
        <position position="486"/>
    </location>
</feature>
<feature type="cross-link" description="Glycyl lysine isopeptide (Lys-Gly) (interchain with G-Cter in SUMO); alternate" evidence="1">
    <location>
        <position position="498"/>
    </location>
</feature>
<feature type="cross-link" description="Glycyl lysine isopeptide (Lys-Gly) (interchain with G-Cter in SUMO2); alternate" evidence="2">
    <location>
        <position position="498"/>
    </location>
</feature>
<dbReference type="EMBL" id="AB168942">
    <property type="protein sequence ID" value="BAE01043.1"/>
    <property type="molecule type" value="mRNA"/>
</dbReference>
<dbReference type="RefSeq" id="NP_001274590.1">
    <property type="nucleotide sequence ID" value="NM_001287661.1"/>
</dbReference>
<dbReference type="RefSeq" id="XP_045223412.1">
    <property type="nucleotide sequence ID" value="XM_045367477.2"/>
</dbReference>
<dbReference type="SMR" id="Q4R779"/>
<dbReference type="STRING" id="9541.ENSMFAP00000031804"/>
<dbReference type="Ensembl" id="ENSMFAT00000006019.2">
    <property type="protein sequence ID" value="ENSMFAP00000031799.1"/>
    <property type="gene ID" value="ENSMFAG00000036935.2"/>
</dbReference>
<dbReference type="GeneID" id="102131118"/>
<dbReference type="VEuPathDB" id="HostDB:ENSMFAG00000036935"/>
<dbReference type="eggNOG" id="KOG2572">
    <property type="taxonomic scope" value="Eukaryota"/>
</dbReference>
<dbReference type="GeneTree" id="ENSGT00940000153534"/>
<dbReference type="OMA" id="MGMRSNW"/>
<dbReference type="Proteomes" id="UP000233100">
    <property type="component" value="Chromosome 12"/>
</dbReference>
<dbReference type="Bgee" id="ENSMFAG00000036935">
    <property type="expression patterns" value="Expressed in lymph node and 13 other cell types or tissues"/>
</dbReference>
<dbReference type="GO" id="GO:0031428">
    <property type="term" value="C:box C/D methylation guide snoRNP complex"/>
    <property type="evidence" value="ECO:0000250"/>
    <property type="project" value="UniProtKB"/>
</dbReference>
<dbReference type="GO" id="GO:0005730">
    <property type="term" value="C:nucleolus"/>
    <property type="evidence" value="ECO:0000250"/>
    <property type="project" value="UniProtKB"/>
</dbReference>
<dbReference type="GO" id="GO:0005654">
    <property type="term" value="C:nucleoplasm"/>
    <property type="evidence" value="ECO:0007669"/>
    <property type="project" value="UniProtKB-SubCell"/>
</dbReference>
<dbReference type="GO" id="GO:0032040">
    <property type="term" value="C:small-subunit processome"/>
    <property type="evidence" value="ECO:0000250"/>
    <property type="project" value="UniProtKB"/>
</dbReference>
<dbReference type="GO" id="GO:0030515">
    <property type="term" value="F:snoRNA binding"/>
    <property type="evidence" value="ECO:0007669"/>
    <property type="project" value="InterPro"/>
</dbReference>
<dbReference type="GO" id="GO:0042274">
    <property type="term" value="P:ribosomal small subunit biogenesis"/>
    <property type="evidence" value="ECO:0000250"/>
    <property type="project" value="UniProtKB"/>
</dbReference>
<dbReference type="FunFam" id="1.10.246.90:FF:000004">
    <property type="entry name" value="Nucleolar protein 58"/>
    <property type="match status" value="1"/>
</dbReference>
<dbReference type="FunFam" id="1.10.287.4070:FF:000001">
    <property type="entry name" value="Probable Nucleolar protein 58"/>
    <property type="match status" value="1"/>
</dbReference>
<dbReference type="Gene3D" id="1.10.287.4070">
    <property type="match status" value="1"/>
</dbReference>
<dbReference type="Gene3D" id="1.10.246.90">
    <property type="entry name" value="Nop domain"/>
    <property type="match status" value="1"/>
</dbReference>
<dbReference type="InterPro" id="IPR045056">
    <property type="entry name" value="Nop56/Nop58"/>
</dbReference>
<dbReference type="InterPro" id="IPR012974">
    <property type="entry name" value="NOP58/56_N"/>
</dbReference>
<dbReference type="InterPro" id="IPR042239">
    <property type="entry name" value="Nop_C"/>
</dbReference>
<dbReference type="InterPro" id="IPR002687">
    <property type="entry name" value="Nop_dom"/>
</dbReference>
<dbReference type="InterPro" id="IPR036070">
    <property type="entry name" value="Nop_dom_sf"/>
</dbReference>
<dbReference type="InterPro" id="IPR012976">
    <property type="entry name" value="NOSIC"/>
</dbReference>
<dbReference type="PANTHER" id="PTHR10894">
    <property type="entry name" value="NUCLEOLAR PROTEIN 5 NUCLEOLAR PROTEIN NOP5 NOP58"/>
    <property type="match status" value="1"/>
</dbReference>
<dbReference type="PANTHER" id="PTHR10894:SF1">
    <property type="entry name" value="NUCLEOLAR PROTEIN 58"/>
    <property type="match status" value="1"/>
</dbReference>
<dbReference type="Pfam" id="PF01798">
    <property type="entry name" value="Nop"/>
    <property type="match status" value="1"/>
</dbReference>
<dbReference type="Pfam" id="PF08156">
    <property type="entry name" value="NOP5NT"/>
    <property type="match status" value="1"/>
</dbReference>
<dbReference type="SMART" id="SM00931">
    <property type="entry name" value="NOSIC"/>
    <property type="match status" value="1"/>
</dbReference>
<dbReference type="SUPFAM" id="SSF89124">
    <property type="entry name" value="Nop domain"/>
    <property type="match status" value="1"/>
</dbReference>
<dbReference type="PROSITE" id="PS51358">
    <property type="entry name" value="NOP"/>
    <property type="match status" value="1"/>
</dbReference>
<proteinExistence type="evidence at transcript level"/>
<comment type="function">
    <text evidence="2">Required for the biogenesis of box C/D snoRNAs such as U3, U8 and U14 snoRNAs. Part of the small subunit (SSU) processome, first precursor of the small eukaryotic ribosomal subunit. During the assembly of the SSU processome in the nucleolus, many ribosome biogenesis factors, an RNA chaperone and ribosomal proteins associate with the nascent pre-rRNA and work in concert to generate RNA folding, modifications, rearrangements and cleavage as well as targeted degradation of pre-ribosomal RNA by the RNA exosome. Core component of box C/D small nucleolar ribonucleoprotein (snoRNP) complexes that function in methylation of multiple sites on ribosomal RNAs (rRNAs) and messenger RNAs (mRNAs).</text>
</comment>
<comment type="subunit">
    <text evidence="2">Core component of box C/D small nucleolar ribonucleoprotein (snoRNP) particles; the core proteins SNU13, NOP56, NOP58 and FBL or FBLL1 assemble stepwise onto the snoRNA. Interacts with NOLC1/Nopp140. Interacts with NOPCHAP1, NUFIP1, RUVBL1 and RUVBL2; NOPCHAP1 bridges the association of NOP58 with RUVBL1:RUVBL2 and NUFIP1. Interacts with PIH1D1. Part of the small subunit (SSU) processome, composed of more than 70 proteins and the RNA chaperone small nucleolar RNA (snoRNA) U3.</text>
</comment>
<comment type="subcellular location">
    <subcellularLocation>
        <location evidence="2">Nucleus</location>
        <location evidence="2">Nucleolus</location>
    </subcellularLocation>
    <subcellularLocation>
        <location evidence="2">Nucleus</location>
        <location evidence="2">Nucleoplasm</location>
    </subcellularLocation>
    <text evidence="2">Localizes to the nucleolus with a minor part present in the nucleoplasm.</text>
</comment>
<comment type="PTM">
    <text evidence="2">Sumoylation is essential for high-affinity binding to snoRNAs.</text>
</comment>
<comment type="similarity">
    <text evidence="5">Belongs to the NOP5/NOP56 family.</text>
</comment>
<sequence>MLVLFETSVGYAIFKVLNEKKLQEVDSLWKEFETPEKANKIVKLKHFEKFQDTAEALAAFTALMEGKINKQLKKVLKKIVKEAHEPLAVADAKLGGVIKEKLNLSCIHSPVVNELMRGIRSQMDGLIPGVEPREMAAMCLGLAHSLSRYRLKFSADKVDTMIVQAISLLDDLDKELNNYIMRCREWYGWHFPELGKIISDNLTYCKCLQKVGDRKNYASAKLSELLPEEVEAEVKAAAEISMGTEVSEEDICNILHLCTQVIEISEYRTQLYEYLQNRMMAIAPNVTVMVGELVGARLIAHAGSLLNLAKHAASTVQILGAEKALFRALKSRRDTPKYGLIYHASLVGQTSPKHKGKISRMLAAKTVLAIRYDAFGEDSSSAMGVENRAKLEARLRTLEDRGIRKISGTGKALAKTEKYEHKSEVKTYDPSGDSTLPTCSKKRKIEQVDKEDEITEKKAKKAKIKVKVEEEEEEEKVAEEEETSVKKKKKKGKKKHIKEEPLSEEEPCTSTAIASPEKKKKKKKKRDNED</sequence>
<name>NOP58_MACFA</name>